<reference key="1">
    <citation type="journal article" date="2003" name="Science">
        <title>In-depth view of structure, activity, and evolution of rice chromosome 10.</title>
        <authorList>
            <person name="Yu Y."/>
            <person name="Rambo T."/>
            <person name="Currie J."/>
            <person name="Saski C."/>
            <person name="Kim H.-R."/>
            <person name="Collura K."/>
            <person name="Thompson S."/>
            <person name="Simmons J."/>
            <person name="Yang T.-J."/>
            <person name="Nah G."/>
            <person name="Patel A.J."/>
            <person name="Thurmond S."/>
            <person name="Henry D."/>
            <person name="Oates R."/>
            <person name="Palmer M."/>
            <person name="Pries G."/>
            <person name="Gibson J."/>
            <person name="Anderson H."/>
            <person name="Paradkar M."/>
            <person name="Crane L."/>
            <person name="Dale J."/>
            <person name="Carver M.B."/>
            <person name="Wood T."/>
            <person name="Frisch D."/>
            <person name="Engler F."/>
            <person name="Soderlund C."/>
            <person name="Palmer L.E."/>
            <person name="Teytelman L."/>
            <person name="Nascimento L."/>
            <person name="De la Bastide M."/>
            <person name="Spiegel L."/>
            <person name="Ware D."/>
            <person name="O'Shaughnessy A."/>
            <person name="Dike S."/>
            <person name="Dedhia N."/>
            <person name="Preston R."/>
            <person name="Huang E."/>
            <person name="Ferraro K."/>
            <person name="Kuit K."/>
            <person name="Miller B."/>
            <person name="Zutavern T."/>
            <person name="Katzenberger F."/>
            <person name="Muller S."/>
            <person name="Balija V."/>
            <person name="Martienssen R.A."/>
            <person name="Stein L."/>
            <person name="Minx P."/>
            <person name="Johnson D."/>
            <person name="Cordum H."/>
            <person name="Mardis E."/>
            <person name="Cheng Z."/>
            <person name="Jiang J."/>
            <person name="Wilson R."/>
            <person name="McCombie W.R."/>
            <person name="Wing R.A."/>
            <person name="Yuan Q."/>
            <person name="Ouyang S."/>
            <person name="Liu J."/>
            <person name="Jones K.M."/>
            <person name="Gansberger K."/>
            <person name="Moffat K."/>
            <person name="Hill J."/>
            <person name="Tsitrin T."/>
            <person name="Overton L."/>
            <person name="Bera J."/>
            <person name="Kim M."/>
            <person name="Jin S."/>
            <person name="Tallon L."/>
            <person name="Ciecko A."/>
            <person name="Pai G."/>
            <person name="Van Aken S."/>
            <person name="Utterback T."/>
            <person name="Reidmuller S."/>
            <person name="Bormann J."/>
            <person name="Feldblyum T."/>
            <person name="Hsiao J."/>
            <person name="Zismann V."/>
            <person name="Blunt S."/>
            <person name="de Vazeille A.R."/>
            <person name="Shaffer T."/>
            <person name="Koo H."/>
            <person name="Suh B."/>
            <person name="Yang Q."/>
            <person name="Haas B."/>
            <person name="Peterson J."/>
            <person name="Pertea M."/>
            <person name="Volfovsky N."/>
            <person name="Wortman J."/>
            <person name="White O."/>
            <person name="Salzberg S.L."/>
            <person name="Fraser C.M."/>
            <person name="Buell C.R."/>
            <person name="Messing J."/>
            <person name="Song R."/>
            <person name="Fuks G."/>
            <person name="Llaca V."/>
            <person name="Kovchak S."/>
            <person name="Young S."/>
            <person name="Bowers J.E."/>
            <person name="Paterson A.H."/>
            <person name="Johns M.A."/>
            <person name="Mao L."/>
            <person name="Pan H."/>
            <person name="Dean R.A."/>
        </authorList>
    </citation>
    <scope>NUCLEOTIDE SEQUENCE [LARGE SCALE GENOMIC DNA]</scope>
    <source>
        <strain>cv. Nipponbare</strain>
    </source>
</reference>
<reference key="2">
    <citation type="journal article" date="2005" name="Nature">
        <title>The map-based sequence of the rice genome.</title>
        <authorList>
            <consortium name="International rice genome sequencing project (IRGSP)"/>
        </authorList>
    </citation>
    <scope>NUCLEOTIDE SEQUENCE [LARGE SCALE GENOMIC DNA]</scope>
    <source>
        <strain>cv. Nipponbare</strain>
    </source>
</reference>
<reference key="3">
    <citation type="journal article" date="2008" name="Nucleic Acids Res.">
        <title>The rice annotation project database (RAP-DB): 2008 update.</title>
        <authorList>
            <consortium name="The rice annotation project (RAP)"/>
        </authorList>
    </citation>
    <scope>GENOME REANNOTATION</scope>
    <source>
        <strain>cv. Nipponbare</strain>
    </source>
</reference>
<reference key="4">
    <citation type="journal article" date="2013" name="Rice">
        <title>Improvement of the Oryza sativa Nipponbare reference genome using next generation sequence and optical map data.</title>
        <authorList>
            <person name="Kawahara Y."/>
            <person name="de la Bastide M."/>
            <person name="Hamilton J.P."/>
            <person name="Kanamori H."/>
            <person name="McCombie W.R."/>
            <person name="Ouyang S."/>
            <person name="Schwartz D.C."/>
            <person name="Tanaka T."/>
            <person name="Wu J."/>
            <person name="Zhou S."/>
            <person name="Childs K.L."/>
            <person name="Davidson R.M."/>
            <person name="Lin H."/>
            <person name="Quesada-Ocampo L."/>
            <person name="Vaillancourt B."/>
            <person name="Sakai H."/>
            <person name="Lee S.S."/>
            <person name="Kim J."/>
            <person name="Numa H."/>
            <person name="Itoh T."/>
            <person name="Buell C.R."/>
            <person name="Matsumoto T."/>
        </authorList>
    </citation>
    <scope>GENOME REANNOTATION</scope>
    <source>
        <strain>cv. Nipponbare</strain>
    </source>
</reference>
<reference key="5">
    <citation type="submission" date="2006-10" db="EMBL/GenBank/DDBJ databases">
        <title>Oryza sativa full length cDNA.</title>
        <authorList>
            <consortium name="The rice full-length cDNA consortium"/>
        </authorList>
    </citation>
    <scope>NUCLEOTIDE SEQUENCE [LARGE SCALE MRNA]</scope>
    <source>
        <strain>cv. Nipponbare</strain>
    </source>
</reference>
<comment type="function">
    <text evidence="1">Structural component of heterochromatin involved in gene repression. Recognizes and binds histone H3 tails methylated at 'Lys-9', leading to epigenetic repression (By similarity).</text>
</comment>
<comment type="subunit">
    <text evidence="1">Homodimer.</text>
</comment>
<comment type="subcellular location">
    <subcellularLocation>
        <location evidence="1">Nucleus</location>
    </subcellularLocation>
</comment>
<comment type="domain">
    <text evidence="1">The chromo domain specifically binds to dimethylated H3 'Lys-9' while the chromo shadow domain is required for dimerization.</text>
</comment>
<comment type="sequence caution" evidence="4">
    <conflict type="erroneous gene model prediction">
        <sequence resource="EMBL-CDS" id="AAK92567"/>
    </conflict>
</comment>
<comment type="sequence caution" evidence="4">
    <conflict type="erroneous gene model prediction">
        <sequence resource="EMBL-CDS" id="BAF26265"/>
    </conflict>
</comment>
<protein>
    <recommendedName>
        <fullName>Probable chromo domain-containing protein LHP1</fullName>
    </recommendedName>
    <alternativeName>
        <fullName>Protein LIKE HETEROCHROMATIN PROTEIN 1</fullName>
    </alternativeName>
</protein>
<keyword id="KW-0156">Chromatin regulator</keyword>
<keyword id="KW-0539">Nucleus</keyword>
<keyword id="KW-1185">Reference proteome</keyword>
<keyword id="KW-0677">Repeat</keyword>
<keyword id="KW-0678">Repressor</keyword>
<keyword id="KW-0804">Transcription</keyword>
<keyword id="KW-0805">Transcription regulation</keyword>
<feature type="chain" id="PRO_0000247866" description="Probable chromo domain-containing protein LHP1">
    <location>
        <begin position="1"/>
        <end position="415"/>
    </location>
</feature>
<feature type="domain" description="Chromo 1" evidence="2">
    <location>
        <begin position="107"/>
        <end position="166"/>
    </location>
</feature>
<feature type="domain" description="Chromo 2; shadow subtype" evidence="2">
    <location>
        <begin position="348"/>
        <end position="412"/>
    </location>
</feature>
<feature type="region of interest" description="Disordered" evidence="3">
    <location>
        <begin position="1"/>
        <end position="102"/>
    </location>
</feature>
<feature type="region of interest" description="Disordered" evidence="3">
    <location>
        <begin position="158"/>
        <end position="209"/>
    </location>
</feature>
<feature type="region of interest" description="Disordered" evidence="3">
    <location>
        <begin position="273"/>
        <end position="318"/>
    </location>
</feature>
<feature type="compositionally biased region" description="Acidic residues" evidence="3">
    <location>
        <begin position="10"/>
        <end position="81"/>
    </location>
</feature>
<feature type="compositionally biased region" description="Low complexity" evidence="3">
    <location>
        <begin position="84"/>
        <end position="95"/>
    </location>
</feature>
<feature type="compositionally biased region" description="Polar residues" evidence="3">
    <location>
        <begin position="172"/>
        <end position="182"/>
    </location>
</feature>
<name>LHP1_ORYSJ</name>
<dbReference type="EMBL" id="AC074354">
    <property type="protein sequence ID" value="AAK92567.1"/>
    <property type="status" value="ALT_SEQ"/>
    <property type="molecule type" value="Genomic_DNA"/>
</dbReference>
<dbReference type="EMBL" id="AC090486">
    <property type="protein sequence ID" value="AAM08791.1"/>
    <property type="molecule type" value="Genomic_DNA"/>
</dbReference>
<dbReference type="EMBL" id="DP000086">
    <property type="protein sequence ID" value="ABB47160.1"/>
    <property type="molecule type" value="Genomic_DNA"/>
</dbReference>
<dbReference type="EMBL" id="AP008216">
    <property type="protein sequence ID" value="BAF26265.1"/>
    <property type="status" value="ALT_SEQ"/>
    <property type="molecule type" value="Genomic_DNA"/>
</dbReference>
<dbReference type="EMBL" id="AP014966">
    <property type="protein sequence ID" value="BAT10326.1"/>
    <property type="molecule type" value="Genomic_DNA"/>
</dbReference>
<dbReference type="EMBL" id="AK243085">
    <property type="protein sequence ID" value="BAH01444.1"/>
    <property type="molecule type" value="mRNA"/>
</dbReference>
<dbReference type="RefSeq" id="XP_015614736.1">
    <property type="nucleotide sequence ID" value="XM_015759250.1"/>
</dbReference>
<dbReference type="SMR" id="Q339W7"/>
<dbReference type="FunCoup" id="Q339W7">
    <property type="interactions" value="1051"/>
</dbReference>
<dbReference type="STRING" id="39947.Q339W7"/>
<dbReference type="PaxDb" id="39947-Q339W7"/>
<dbReference type="EnsemblPlants" id="Os10t0324900-01">
    <property type="protein sequence ID" value="Os10t0324900-01"/>
    <property type="gene ID" value="Os10g0324900"/>
</dbReference>
<dbReference type="Gramene" id="Os10t0324900-01">
    <property type="protein sequence ID" value="Os10t0324900-01"/>
    <property type="gene ID" value="Os10g0324900"/>
</dbReference>
<dbReference type="eggNOG" id="KOG1911">
    <property type="taxonomic scope" value="Eukaryota"/>
</dbReference>
<dbReference type="HOGENOM" id="CLU_035097_0_0_1"/>
<dbReference type="InParanoid" id="Q339W7"/>
<dbReference type="OMA" id="QCLRYNP"/>
<dbReference type="OrthoDB" id="1918685at2759"/>
<dbReference type="Proteomes" id="UP000000763">
    <property type="component" value="Chromosome 10"/>
</dbReference>
<dbReference type="Proteomes" id="UP000059680">
    <property type="component" value="Chromosome 10"/>
</dbReference>
<dbReference type="GO" id="GO:0000792">
    <property type="term" value="C:heterochromatin"/>
    <property type="evidence" value="ECO:0007669"/>
    <property type="project" value="UniProtKB-ARBA"/>
</dbReference>
<dbReference type="GO" id="GO:0005634">
    <property type="term" value="C:nucleus"/>
    <property type="evidence" value="ECO:0007669"/>
    <property type="project" value="UniProtKB-SubCell"/>
</dbReference>
<dbReference type="GO" id="GO:0031507">
    <property type="term" value="P:heterochromatin formation"/>
    <property type="evidence" value="ECO:0007669"/>
    <property type="project" value="InterPro"/>
</dbReference>
<dbReference type="CDD" id="cd00024">
    <property type="entry name" value="CD_CSD"/>
    <property type="match status" value="1"/>
</dbReference>
<dbReference type="CDD" id="cd18982">
    <property type="entry name" value="CSD"/>
    <property type="match status" value="1"/>
</dbReference>
<dbReference type="Gene3D" id="2.40.50.40">
    <property type="match status" value="1"/>
</dbReference>
<dbReference type="InterPro" id="IPR016197">
    <property type="entry name" value="Chromo-like_dom_sf"/>
</dbReference>
<dbReference type="InterPro" id="IPR000953">
    <property type="entry name" value="Chromo/chromo_shadow_dom"/>
</dbReference>
<dbReference type="InterPro" id="IPR017984">
    <property type="entry name" value="Chromo_dom_subgr"/>
</dbReference>
<dbReference type="InterPro" id="IPR023780">
    <property type="entry name" value="Chromo_domain"/>
</dbReference>
<dbReference type="InterPro" id="IPR008251">
    <property type="entry name" value="Chromo_shadow_dom"/>
</dbReference>
<dbReference type="InterPro" id="IPR023779">
    <property type="entry name" value="Chromodomain_CS"/>
</dbReference>
<dbReference type="InterPro" id="IPR044251">
    <property type="entry name" value="LHP1-like"/>
</dbReference>
<dbReference type="PANTHER" id="PTHR47240">
    <property type="entry name" value="CHROMO DOMAIN-CONTAINING PROTEIN LHP1"/>
    <property type="match status" value="1"/>
</dbReference>
<dbReference type="PANTHER" id="PTHR47240:SF2">
    <property type="entry name" value="CHROMO DOMAIN-CONTAINING PROTEIN LHP1"/>
    <property type="match status" value="1"/>
</dbReference>
<dbReference type="Pfam" id="PF00385">
    <property type="entry name" value="Chromo"/>
    <property type="match status" value="1"/>
</dbReference>
<dbReference type="PRINTS" id="PR00504">
    <property type="entry name" value="CHROMODOMAIN"/>
</dbReference>
<dbReference type="SMART" id="SM00298">
    <property type="entry name" value="CHROMO"/>
    <property type="match status" value="1"/>
</dbReference>
<dbReference type="SMART" id="SM00300">
    <property type="entry name" value="ChSh"/>
    <property type="match status" value="1"/>
</dbReference>
<dbReference type="SUPFAM" id="SSF54160">
    <property type="entry name" value="Chromo domain-like"/>
    <property type="match status" value="1"/>
</dbReference>
<dbReference type="PROSITE" id="PS00598">
    <property type="entry name" value="CHROMO_1"/>
    <property type="match status" value="1"/>
</dbReference>
<dbReference type="PROSITE" id="PS50013">
    <property type="entry name" value="CHROMO_2"/>
    <property type="match status" value="1"/>
</dbReference>
<proteinExistence type="evidence at transcript level"/>
<evidence type="ECO:0000250" key="1"/>
<evidence type="ECO:0000255" key="2">
    <source>
        <dbReference type="PROSITE-ProRule" id="PRU00053"/>
    </source>
</evidence>
<evidence type="ECO:0000256" key="3">
    <source>
        <dbReference type="SAM" id="MobiDB-lite"/>
    </source>
</evidence>
<evidence type="ECO:0000305" key="4"/>
<accession>Q339W7</accession>
<accession>B7F9Z6</accession>
<accession>Q0IYF0</accession>
<accession>Q8S793</accession>
<accession>Q94HR8</accession>
<sequence length="415" mass="45675">MARGKNHPDGEEEEAPAAAGEEEAPVEMDEEGEMEEEEEEEQGEGEGEERDEGEEEEEWEDAEEVEGGEESEQAAAEEEDSPLVVVEAEAAAPVVDGSPPKLAEGYYEIEDIRRRRLRKGKLQYLVKWRGWPESANTWEPLENLSACSDIIDAFEMRLQSPRPGRKRKRKITTTPVAGSNPSHGKRGRPRLDAKSHTRAPAPEPKQLPCRTSCRRATNCSSKTVAGLDASGSVVRNQLAQNIVQEGSSSVISRTPCQELPLSIRLTDQQNEHHLVNGSSNSENLVKVPPSQGGQVTGAKKRKSGNVRRFEQNKPTQGQGECGALVVAEDVGSTEGETGDKKKTEGCPNRVHITKIIKPVRFAAAVNNDVQQVSITFKALRSDGQEVMVDDKELKANNPLLLISYYEQCLRYNPTS</sequence>
<organism>
    <name type="scientific">Oryza sativa subsp. japonica</name>
    <name type="common">Rice</name>
    <dbReference type="NCBI Taxonomy" id="39947"/>
    <lineage>
        <taxon>Eukaryota</taxon>
        <taxon>Viridiplantae</taxon>
        <taxon>Streptophyta</taxon>
        <taxon>Embryophyta</taxon>
        <taxon>Tracheophyta</taxon>
        <taxon>Spermatophyta</taxon>
        <taxon>Magnoliopsida</taxon>
        <taxon>Liliopsida</taxon>
        <taxon>Poales</taxon>
        <taxon>Poaceae</taxon>
        <taxon>BOP clade</taxon>
        <taxon>Oryzoideae</taxon>
        <taxon>Oryzeae</taxon>
        <taxon>Oryzinae</taxon>
        <taxon>Oryza</taxon>
        <taxon>Oryza sativa</taxon>
    </lineage>
</organism>
<gene>
    <name type="primary">LHP1</name>
    <name type="ordered locus">Os10g0324900</name>
    <name type="ordered locus">LOC_Os10g17770</name>
    <name type="ORF">OSJNBa0065C16.1</name>
    <name type="ORF">OSJNBa0093I09.2</name>
</gene>